<name>CHI2_RHIOL</name>
<comment type="function">
    <text>Probably involved in the apical growth and branching of fungal hyphae.</text>
</comment>
<comment type="catalytic activity">
    <reaction>
        <text>Random endo-hydrolysis of N-acetyl-beta-D-glucosaminide (1-&gt;4)-beta-linkages in chitin and chitodextrins.</text>
        <dbReference type="EC" id="3.2.1.14"/>
    </reaction>
</comment>
<comment type="subunit">
    <text>Monomer.</text>
</comment>
<comment type="subcellular location">
    <subcellularLocation>
        <location evidence="5">Secreted</location>
    </subcellularLocation>
</comment>
<comment type="PTM">
    <text>O-glycosylated.</text>
</comment>
<comment type="similarity">
    <text evidence="5">Belongs to the glycosyl hydrolase 18 family. Chitinase class III subfamily.</text>
</comment>
<keyword id="KW-0119">Carbohydrate metabolism</keyword>
<keyword id="KW-0146">Chitin degradation</keyword>
<keyword id="KW-0147">Chitin-binding</keyword>
<keyword id="KW-0903">Direct protein sequencing</keyword>
<keyword id="KW-0325">Glycoprotein</keyword>
<keyword id="KW-0326">Glycosidase</keyword>
<keyword id="KW-0378">Hydrolase</keyword>
<keyword id="KW-0624">Polysaccharide degradation</keyword>
<keyword id="KW-0964">Secreted</keyword>
<keyword id="KW-0732">Signal</keyword>
<keyword id="KW-0865">Zymogen</keyword>
<organism>
    <name type="scientific">Rhizopus oligosporus</name>
    <name type="common">Rhizopus microsporus var. oligosporus</name>
    <dbReference type="NCBI Taxonomy" id="4847"/>
    <lineage>
        <taxon>Eukaryota</taxon>
        <taxon>Fungi</taxon>
        <taxon>Fungi incertae sedis</taxon>
        <taxon>Mucoromycota</taxon>
        <taxon>Mucoromycotina</taxon>
        <taxon>Mucoromycetes</taxon>
        <taxon>Mucorales</taxon>
        <taxon>Mucorineae</taxon>
        <taxon>Rhizopodaceae</taxon>
        <taxon>Rhizopus</taxon>
    </lineage>
</organism>
<sequence length="542" mass="56528">MLTRTFLGMAISAFLASTGVQAAWSSHGPNVMYYWGQNSAGGSNTQASLGTYCESGQVDAVLLSFLHVFNVGGIPEINLSSACAGTYFPNTQLLSCPAVGADIKKCQDKGVKVILSLGGAAGVYGFTSDAQGQQFAQTIWNLFGGGNSDTRPFGDAVIDGVDLDIEGGSSTGYVAFVNALRQKFSSNFLIGAAPQCPFPDAILGSVLNSASFDYVNVQFYNNYCSATGSSFNFDTWDNWAKTTSPNKNVKIMFTVPGSSTAAGSGYVPMSTLQTIVPSLASKYSSYGGVSVWDASQAWNNGGFNSQLYSLVHSGGSTPPPPSSSSATKTTTKTTATSTKTTTTTAPTATSTPGSCPVANQPCSTQNQYACTADGKYAVCDHGKWVASSCPSNTVCIPTTDGASIYCGYATGSGSTCPSVSALEITAASLGSKNGPVPRPYKASKVAAQLAVTSTDKNSFEAVINARRTTLTPFEKSVTIEFTTPSNIKFTESDMGPVRQVGNKVRIQAKNDYNESMTLVVKVKGSINSGVFVAPSTSAWNFK</sequence>
<gene>
    <name type="primary">CHI2</name>
</gene>
<protein>
    <recommendedName>
        <fullName>Chitinase 2</fullName>
        <ecNumber>3.2.1.14</ecNumber>
    </recommendedName>
</protein>
<proteinExistence type="evidence at protein level"/>
<accession>P29027</accession>
<reference key="1">
    <citation type="journal article" date="1992" name="J. Bacteriol.">
        <title>Purification of two chitinases from Rhizopus oligosporus and isolation and sequencing of the encoding genes.</title>
        <authorList>
            <person name="Yanai K."/>
            <person name="Takaya N."/>
            <person name="Kojima N."/>
            <person name="Horiuchi H."/>
            <person name="Ohta A."/>
            <person name="Takagi M."/>
        </authorList>
    </citation>
    <scope>NUCLEOTIDE SEQUENCE [GENOMIC DNA]</scope>
    <scope>PROTEIN SEQUENCE OF 23-38</scope>
    <source>
        <strain>ATCC 22959 / CBS 338.62 / NBRC 8631 / NRRL 2710 / AS 3.4818</strain>
    </source>
</reference>
<feature type="signal peptide" evidence="4">
    <location>
        <begin position="1"/>
        <end position="22"/>
    </location>
</feature>
<feature type="chain" id="PRO_0000011932" description="Chitinase 2">
    <location>
        <begin position="23"/>
        <end position="446"/>
    </location>
</feature>
<feature type="propeptide" id="PRO_0000011933" evidence="1">
    <location>
        <begin position="447"/>
        <end position="542"/>
    </location>
</feature>
<feature type="domain" description="GH18" evidence="2">
    <location>
        <begin position="29"/>
        <end position="314"/>
    </location>
</feature>
<feature type="region of interest" description="Disordered" evidence="3">
    <location>
        <begin position="312"/>
        <end position="356"/>
    </location>
</feature>
<feature type="region of interest" description="Chitin-binding, high affinity">
    <location>
        <begin position="355"/>
        <end position="406"/>
    </location>
</feature>
<feature type="compositionally biased region" description="Low complexity" evidence="3">
    <location>
        <begin position="323"/>
        <end position="354"/>
    </location>
</feature>
<feature type="active site" description="Proton donor" evidence="2">
    <location>
        <position position="166"/>
    </location>
</feature>
<evidence type="ECO:0000255" key="1"/>
<evidence type="ECO:0000255" key="2">
    <source>
        <dbReference type="PROSITE-ProRule" id="PRU01258"/>
    </source>
</evidence>
<evidence type="ECO:0000256" key="3">
    <source>
        <dbReference type="SAM" id="MobiDB-lite"/>
    </source>
</evidence>
<evidence type="ECO:0000269" key="4">
    <source>
    </source>
</evidence>
<evidence type="ECO:0000305" key="5"/>
<dbReference type="EC" id="3.2.1.14"/>
<dbReference type="EMBL" id="D10158">
    <property type="protein sequence ID" value="BAA01022.1"/>
    <property type="molecule type" value="Genomic_DNA"/>
</dbReference>
<dbReference type="PIR" id="B47022">
    <property type="entry name" value="B47022"/>
</dbReference>
<dbReference type="SMR" id="P29027"/>
<dbReference type="CAZy" id="CBM19">
    <property type="family name" value="Carbohydrate-Binding Module Family 19"/>
</dbReference>
<dbReference type="CAZy" id="GH18">
    <property type="family name" value="Glycoside Hydrolase Family 18"/>
</dbReference>
<dbReference type="GO" id="GO:0005576">
    <property type="term" value="C:extracellular region"/>
    <property type="evidence" value="ECO:0007669"/>
    <property type="project" value="UniProtKB-SubCell"/>
</dbReference>
<dbReference type="GO" id="GO:0008061">
    <property type="term" value="F:chitin binding"/>
    <property type="evidence" value="ECO:0007669"/>
    <property type="project" value="UniProtKB-KW"/>
</dbReference>
<dbReference type="GO" id="GO:0008843">
    <property type="term" value="F:endochitinase activity"/>
    <property type="evidence" value="ECO:0007669"/>
    <property type="project" value="UniProtKB-EC"/>
</dbReference>
<dbReference type="GO" id="GO:0006032">
    <property type="term" value="P:chitin catabolic process"/>
    <property type="evidence" value="ECO:0007669"/>
    <property type="project" value="UniProtKB-KW"/>
</dbReference>
<dbReference type="GO" id="GO:0000272">
    <property type="term" value="P:polysaccharide catabolic process"/>
    <property type="evidence" value="ECO:0007669"/>
    <property type="project" value="UniProtKB-KW"/>
</dbReference>
<dbReference type="CDD" id="cd02877">
    <property type="entry name" value="GH18_hevamine_XipI_class_III"/>
    <property type="match status" value="1"/>
</dbReference>
<dbReference type="Gene3D" id="3.20.20.80">
    <property type="entry name" value="Glycosidases"/>
    <property type="match status" value="1"/>
</dbReference>
<dbReference type="InterPro" id="IPR005089">
    <property type="entry name" value="CBM19"/>
</dbReference>
<dbReference type="InterPro" id="IPR045321">
    <property type="entry name" value="Cts1-like"/>
</dbReference>
<dbReference type="InterPro" id="IPR001223">
    <property type="entry name" value="Glyco_hydro18_cat"/>
</dbReference>
<dbReference type="InterPro" id="IPR001579">
    <property type="entry name" value="Glyco_hydro_18_chit_AS"/>
</dbReference>
<dbReference type="InterPro" id="IPR017853">
    <property type="entry name" value="Glycoside_hydrolase_SF"/>
</dbReference>
<dbReference type="InterPro" id="IPR050542">
    <property type="entry name" value="Glycosyl_Hydrlase18_Chitinase"/>
</dbReference>
<dbReference type="PANTHER" id="PTHR45708">
    <property type="entry name" value="ENDOCHITINASE"/>
    <property type="match status" value="1"/>
</dbReference>
<dbReference type="PANTHER" id="PTHR45708:SF49">
    <property type="entry name" value="ENDOCHITINASE"/>
    <property type="match status" value="1"/>
</dbReference>
<dbReference type="Pfam" id="PF03427">
    <property type="entry name" value="CBM_19"/>
    <property type="match status" value="1"/>
</dbReference>
<dbReference type="Pfam" id="PF00704">
    <property type="entry name" value="Glyco_hydro_18"/>
    <property type="match status" value="1"/>
</dbReference>
<dbReference type="SUPFAM" id="SSF51445">
    <property type="entry name" value="(Trans)glycosidases"/>
    <property type="match status" value="1"/>
</dbReference>
<dbReference type="PROSITE" id="PS01095">
    <property type="entry name" value="GH18_1"/>
    <property type="match status" value="1"/>
</dbReference>
<dbReference type="PROSITE" id="PS51910">
    <property type="entry name" value="GH18_2"/>
    <property type="match status" value="1"/>
</dbReference>